<proteinExistence type="inferred from homology"/>
<accession>Q3AME2</accession>
<keyword id="KW-0067">ATP-binding</keyword>
<keyword id="KW-0963">Cytoplasm</keyword>
<keyword id="KW-0460">Magnesium</keyword>
<keyword id="KW-0479">Metal-binding</keyword>
<keyword id="KW-0547">Nucleotide-binding</keyword>
<keyword id="KW-0554">One-carbon metabolism</keyword>
<keyword id="KW-0630">Potassium</keyword>
<keyword id="KW-0808">Transferase</keyword>
<sequence>MSRYVFTSESVTEGHPDKICDQVSDAVLDALLAQDPSSRVACETVVNTGLCMITGEVTSKAQVDFIHLVRNVIKEIGYSGARAGGFDANSCAVLVALDQQSPDIAQGVNEADDHAGDPLDLVGAGDQGIMFGYACNETPELMPLPISLAHRLSRRLAEVRHNGTLGYLLPDGKTQVSVVYENDKPVSIDTILISTQHTAEVDGISDEQGIRERITEDLWTHVVEPATADLALKPSREATKYLVNPTGKFVVGGPQGDAGLTGRKIIVDTYGGYARHGGGAFSGKDPTKVDRSAAYAARYVAKCLVAAGLAERAEVQLSYAIGVAKPVSILVESFGTSALANDALTALVQEHFDLRPGAIIETFGLRNLPQQRGGCFYQDTAAYGHFGRNDLNAPWEDVTAKSQELKQVAAA</sequence>
<reference key="1">
    <citation type="submission" date="2005-07" db="EMBL/GenBank/DDBJ databases">
        <title>Complete sequence of Synechococcus sp. CC9605.</title>
        <authorList>
            <consortium name="US DOE Joint Genome Institute"/>
            <person name="Copeland A."/>
            <person name="Lucas S."/>
            <person name="Lapidus A."/>
            <person name="Barry K."/>
            <person name="Detter J.C."/>
            <person name="Glavina T."/>
            <person name="Hammon N."/>
            <person name="Israni S."/>
            <person name="Pitluck S."/>
            <person name="Schmutz J."/>
            <person name="Martinez M."/>
            <person name="Larimer F."/>
            <person name="Land M."/>
            <person name="Kyrpides N."/>
            <person name="Ivanova N."/>
            <person name="Richardson P."/>
        </authorList>
    </citation>
    <scope>NUCLEOTIDE SEQUENCE [LARGE SCALE GENOMIC DNA]</scope>
    <source>
        <strain>CC9605</strain>
    </source>
</reference>
<protein>
    <recommendedName>
        <fullName evidence="1">S-adenosylmethionine synthase</fullName>
        <shortName evidence="1">AdoMet synthase</shortName>
        <ecNumber evidence="1">2.5.1.6</ecNumber>
    </recommendedName>
    <alternativeName>
        <fullName evidence="1">MAT</fullName>
    </alternativeName>
    <alternativeName>
        <fullName evidence="1">Methionine adenosyltransferase</fullName>
    </alternativeName>
</protein>
<evidence type="ECO:0000255" key="1">
    <source>
        <dbReference type="HAMAP-Rule" id="MF_00086"/>
    </source>
</evidence>
<dbReference type="EC" id="2.5.1.6" evidence="1"/>
<dbReference type="EMBL" id="CP000110">
    <property type="protein sequence ID" value="ABB34240.1"/>
    <property type="molecule type" value="Genomic_DNA"/>
</dbReference>
<dbReference type="RefSeq" id="WP_011363474.1">
    <property type="nucleotide sequence ID" value="NC_007516.1"/>
</dbReference>
<dbReference type="SMR" id="Q3AME2"/>
<dbReference type="STRING" id="110662.Syncc9605_0466"/>
<dbReference type="KEGG" id="syd:Syncc9605_0466"/>
<dbReference type="eggNOG" id="COG0192">
    <property type="taxonomic scope" value="Bacteria"/>
</dbReference>
<dbReference type="HOGENOM" id="CLU_041802_1_1_3"/>
<dbReference type="OrthoDB" id="9801686at2"/>
<dbReference type="UniPathway" id="UPA00315">
    <property type="reaction ID" value="UER00080"/>
</dbReference>
<dbReference type="GO" id="GO:0005737">
    <property type="term" value="C:cytoplasm"/>
    <property type="evidence" value="ECO:0007669"/>
    <property type="project" value="UniProtKB-SubCell"/>
</dbReference>
<dbReference type="GO" id="GO:0005524">
    <property type="term" value="F:ATP binding"/>
    <property type="evidence" value="ECO:0007669"/>
    <property type="project" value="UniProtKB-UniRule"/>
</dbReference>
<dbReference type="GO" id="GO:0000287">
    <property type="term" value="F:magnesium ion binding"/>
    <property type="evidence" value="ECO:0007669"/>
    <property type="project" value="UniProtKB-UniRule"/>
</dbReference>
<dbReference type="GO" id="GO:0004478">
    <property type="term" value="F:methionine adenosyltransferase activity"/>
    <property type="evidence" value="ECO:0007669"/>
    <property type="project" value="UniProtKB-UniRule"/>
</dbReference>
<dbReference type="GO" id="GO:0006730">
    <property type="term" value="P:one-carbon metabolic process"/>
    <property type="evidence" value="ECO:0007669"/>
    <property type="project" value="UniProtKB-KW"/>
</dbReference>
<dbReference type="GO" id="GO:0006556">
    <property type="term" value="P:S-adenosylmethionine biosynthetic process"/>
    <property type="evidence" value="ECO:0007669"/>
    <property type="project" value="UniProtKB-UniRule"/>
</dbReference>
<dbReference type="CDD" id="cd18079">
    <property type="entry name" value="S-AdoMet_synt"/>
    <property type="match status" value="1"/>
</dbReference>
<dbReference type="FunFam" id="3.30.300.10:FF:000003">
    <property type="entry name" value="S-adenosylmethionine synthase"/>
    <property type="match status" value="1"/>
</dbReference>
<dbReference type="Gene3D" id="3.30.300.10">
    <property type="match status" value="3"/>
</dbReference>
<dbReference type="HAMAP" id="MF_00086">
    <property type="entry name" value="S_AdoMet_synth1"/>
    <property type="match status" value="1"/>
</dbReference>
<dbReference type="InterPro" id="IPR022631">
    <property type="entry name" value="ADOMET_SYNTHASE_CS"/>
</dbReference>
<dbReference type="InterPro" id="IPR022630">
    <property type="entry name" value="S-AdoMet_synt_C"/>
</dbReference>
<dbReference type="InterPro" id="IPR022629">
    <property type="entry name" value="S-AdoMet_synt_central"/>
</dbReference>
<dbReference type="InterPro" id="IPR022628">
    <property type="entry name" value="S-AdoMet_synt_N"/>
</dbReference>
<dbReference type="InterPro" id="IPR002133">
    <property type="entry name" value="S-AdoMet_synthetase"/>
</dbReference>
<dbReference type="InterPro" id="IPR022636">
    <property type="entry name" value="S-AdoMet_synthetase_sfam"/>
</dbReference>
<dbReference type="NCBIfam" id="TIGR01034">
    <property type="entry name" value="metK"/>
    <property type="match status" value="1"/>
</dbReference>
<dbReference type="PANTHER" id="PTHR11964">
    <property type="entry name" value="S-ADENOSYLMETHIONINE SYNTHETASE"/>
    <property type="match status" value="1"/>
</dbReference>
<dbReference type="Pfam" id="PF02773">
    <property type="entry name" value="S-AdoMet_synt_C"/>
    <property type="match status" value="1"/>
</dbReference>
<dbReference type="Pfam" id="PF02772">
    <property type="entry name" value="S-AdoMet_synt_M"/>
    <property type="match status" value="1"/>
</dbReference>
<dbReference type="Pfam" id="PF00438">
    <property type="entry name" value="S-AdoMet_synt_N"/>
    <property type="match status" value="1"/>
</dbReference>
<dbReference type="PIRSF" id="PIRSF000497">
    <property type="entry name" value="MAT"/>
    <property type="match status" value="1"/>
</dbReference>
<dbReference type="SUPFAM" id="SSF55973">
    <property type="entry name" value="S-adenosylmethionine synthetase"/>
    <property type="match status" value="3"/>
</dbReference>
<dbReference type="PROSITE" id="PS00376">
    <property type="entry name" value="ADOMET_SYNTHASE_1"/>
    <property type="match status" value="1"/>
</dbReference>
<dbReference type="PROSITE" id="PS00377">
    <property type="entry name" value="ADOMET_SYNTHASE_2"/>
    <property type="match status" value="1"/>
</dbReference>
<comment type="function">
    <text evidence="1">Catalyzes the formation of S-adenosylmethionine (AdoMet) from methionine and ATP. The overall synthetic reaction is composed of two sequential steps, AdoMet formation and the subsequent tripolyphosphate hydrolysis which occurs prior to release of AdoMet from the enzyme.</text>
</comment>
<comment type="catalytic activity">
    <reaction evidence="1">
        <text>L-methionine + ATP + H2O = S-adenosyl-L-methionine + phosphate + diphosphate</text>
        <dbReference type="Rhea" id="RHEA:21080"/>
        <dbReference type="ChEBI" id="CHEBI:15377"/>
        <dbReference type="ChEBI" id="CHEBI:30616"/>
        <dbReference type="ChEBI" id="CHEBI:33019"/>
        <dbReference type="ChEBI" id="CHEBI:43474"/>
        <dbReference type="ChEBI" id="CHEBI:57844"/>
        <dbReference type="ChEBI" id="CHEBI:59789"/>
        <dbReference type="EC" id="2.5.1.6"/>
    </reaction>
</comment>
<comment type="cofactor">
    <cofactor evidence="1">
        <name>Mg(2+)</name>
        <dbReference type="ChEBI" id="CHEBI:18420"/>
    </cofactor>
    <text evidence="1">Binds 2 divalent ions per subunit.</text>
</comment>
<comment type="cofactor">
    <cofactor evidence="1">
        <name>K(+)</name>
        <dbReference type="ChEBI" id="CHEBI:29103"/>
    </cofactor>
    <text evidence="1">Binds 1 potassium ion per subunit.</text>
</comment>
<comment type="pathway">
    <text evidence="1">Amino-acid biosynthesis; S-adenosyl-L-methionine biosynthesis; S-adenosyl-L-methionine from L-methionine: step 1/1.</text>
</comment>
<comment type="subunit">
    <text evidence="1">Homotetramer; dimer of dimers.</text>
</comment>
<comment type="subcellular location">
    <subcellularLocation>
        <location evidence="1">Cytoplasm</location>
    </subcellularLocation>
</comment>
<comment type="similarity">
    <text evidence="1">Belongs to the AdoMet synthase family.</text>
</comment>
<gene>
    <name evidence="1" type="primary">metK</name>
    <name type="ordered locus">Syncc9605_0466</name>
</gene>
<name>METK_SYNSC</name>
<organism>
    <name type="scientific">Synechococcus sp. (strain CC9605)</name>
    <dbReference type="NCBI Taxonomy" id="110662"/>
    <lineage>
        <taxon>Bacteria</taxon>
        <taxon>Bacillati</taxon>
        <taxon>Cyanobacteriota</taxon>
        <taxon>Cyanophyceae</taxon>
        <taxon>Synechococcales</taxon>
        <taxon>Synechococcaceae</taxon>
        <taxon>Synechococcus</taxon>
    </lineage>
</organism>
<feature type="chain" id="PRO_0000241047" description="S-adenosylmethionine synthase">
    <location>
        <begin position="1"/>
        <end position="411"/>
    </location>
</feature>
<feature type="region of interest" description="Flexible loop" evidence="1">
    <location>
        <begin position="100"/>
        <end position="110"/>
    </location>
</feature>
<feature type="binding site" description="in other chain" evidence="1">
    <location>
        <position position="15"/>
    </location>
    <ligand>
        <name>ATP</name>
        <dbReference type="ChEBI" id="CHEBI:30616"/>
        <note>ligand shared between two neighboring subunits</note>
    </ligand>
</feature>
<feature type="binding site" evidence="1">
    <location>
        <position position="17"/>
    </location>
    <ligand>
        <name>Mg(2+)</name>
        <dbReference type="ChEBI" id="CHEBI:18420"/>
    </ligand>
</feature>
<feature type="binding site" evidence="1">
    <location>
        <position position="43"/>
    </location>
    <ligand>
        <name>K(+)</name>
        <dbReference type="ChEBI" id="CHEBI:29103"/>
    </ligand>
</feature>
<feature type="binding site" description="in other chain" evidence="1">
    <location>
        <position position="56"/>
    </location>
    <ligand>
        <name>L-methionine</name>
        <dbReference type="ChEBI" id="CHEBI:57844"/>
        <note>ligand shared between two neighboring subunits</note>
    </ligand>
</feature>
<feature type="binding site" description="in other chain" evidence="1">
    <location>
        <position position="100"/>
    </location>
    <ligand>
        <name>L-methionine</name>
        <dbReference type="ChEBI" id="CHEBI:57844"/>
        <note>ligand shared between two neighboring subunits</note>
    </ligand>
</feature>
<feature type="binding site" description="in other chain" evidence="1">
    <location>
        <begin position="171"/>
        <end position="173"/>
    </location>
    <ligand>
        <name>ATP</name>
        <dbReference type="ChEBI" id="CHEBI:30616"/>
        <note>ligand shared between two neighboring subunits</note>
    </ligand>
</feature>
<feature type="binding site" description="in other chain" evidence="1">
    <location>
        <begin position="248"/>
        <end position="249"/>
    </location>
    <ligand>
        <name>ATP</name>
        <dbReference type="ChEBI" id="CHEBI:30616"/>
        <note>ligand shared between two neighboring subunits</note>
    </ligand>
</feature>
<feature type="binding site" evidence="1">
    <location>
        <position position="257"/>
    </location>
    <ligand>
        <name>ATP</name>
        <dbReference type="ChEBI" id="CHEBI:30616"/>
        <note>ligand shared between two neighboring subunits</note>
    </ligand>
</feature>
<feature type="binding site" evidence="1">
    <location>
        <position position="257"/>
    </location>
    <ligand>
        <name>L-methionine</name>
        <dbReference type="ChEBI" id="CHEBI:57844"/>
        <note>ligand shared between two neighboring subunits</note>
    </ligand>
</feature>
<feature type="binding site" description="in other chain" evidence="1">
    <location>
        <begin position="263"/>
        <end position="264"/>
    </location>
    <ligand>
        <name>ATP</name>
        <dbReference type="ChEBI" id="CHEBI:30616"/>
        <note>ligand shared between two neighboring subunits</note>
    </ligand>
</feature>
<feature type="binding site" evidence="1">
    <location>
        <position position="280"/>
    </location>
    <ligand>
        <name>ATP</name>
        <dbReference type="ChEBI" id="CHEBI:30616"/>
        <note>ligand shared between two neighboring subunits</note>
    </ligand>
</feature>
<feature type="binding site" evidence="1">
    <location>
        <position position="284"/>
    </location>
    <ligand>
        <name>ATP</name>
        <dbReference type="ChEBI" id="CHEBI:30616"/>
        <note>ligand shared between two neighboring subunits</note>
    </ligand>
</feature>
<feature type="binding site" description="in other chain" evidence="1">
    <location>
        <position position="288"/>
    </location>
    <ligand>
        <name>L-methionine</name>
        <dbReference type="ChEBI" id="CHEBI:57844"/>
        <note>ligand shared between two neighboring subunits</note>
    </ligand>
</feature>